<reference key="1">
    <citation type="journal article" date="2008" name="Appl. Environ. Microbiol.">
        <title>The genome sequence of the metal-mobilizing, extremely thermoacidophilic archaeon Metallosphaera sedula provides insights into bioleaching-associated metabolism.</title>
        <authorList>
            <person name="Auernik K.S."/>
            <person name="Maezato Y."/>
            <person name="Blum P.H."/>
            <person name="Kelly R.M."/>
        </authorList>
    </citation>
    <scope>NUCLEOTIDE SEQUENCE [LARGE SCALE GENOMIC DNA]</scope>
    <source>
        <strain>ATCC 51363 / DSM 5348 / JCM 9185 / NBRC 15509 / TH2</strain>
    </source>
</reference>
<gene>
    <name evidence="1" type="primary">rpo1C</name>
    <name evidence="1" type="synonym">rpoA2</name>
    <name type="ordered locus">Msed_0035</name>
</gene>
<comment type="function">
    <text evidence="1">DNA-dependent RNA polymerase (RNAP) catalyzes the transcription of DNA into RNA using the four ribonucleoside triphosphates as substrates. Forms part of the jaw domain.</text>
</comment>
<comment type="catalytic activity">
    <reaction evidence="1">
        <text>RNA(n) + a ribonucleoside 5'-triphosphate = RNA(n+1) + diphosphate</text>
        <dbReference type="Rhea" id="RHEA:21248"/>
        <dbReference type="Rhea" id="RHEA-COMP:14527"/>
        <dbReference type="Rhea" id="RHEA-COMP:17342"/>
        <dbReference type="ChEBI" id="CHEBI:33019"/>
        <dbReference type="ChEBI" id="CHEBI:61557"/>
        <dbReference type="ChEBI" id="CHEBI:140395"/>
        <dbReference type="EC" id="2.7.7.6"/>
    </reaction>
</comment>
<comment type="subunit">
    <text evidence="1">Part of the RNA polymerase complex.</text>
</comment>
<comment type="subcellular location">
    <subcellularLocation>
        <location evidence="1">Cytoplasm</location>
    </subcellularLocation>
</comment>
<comment type="similarity">
    <text evidence="1">Belongs to the RNA polymerase beta' chain family.</text>
</comment>
<keyword id="KW-0963">Cytoplasm</keyword>
<keyword id="KW-0238">DNA-binding</keyword>
<keyword id="KW-0240">DNA-directed RNA polymerase</keyword>
<keyword id="KW-0548">Nucleotidyltransferase</keyword>
<keyword id="KW-1185">Reference proteome</keyword>
<keyword id="KW-0804">Transcription</keyword>
<keyword id="KW-0808">Transferase</keyword>
<proteinExistence type="inferred from homology"/>
<evidence type="ECO:0000255" key="1">
    <source>
        <dbReference type="HAMAP-Rule" id="MF_00411"/>
    </source>
</evidence>
<organism>
    <name type="scientific">Metallosphaera sedula (strain ATCC 51363 / DSM 5348 / JCM 9185 / NBRC 15509 / TH2)</name>
    <dbReference type="NCBI Taxonomy" id="399549"/>
    <lineage>
        <taxon>Archaea</taxon>
        <taxon>Thermoproteota</taxon>
        <taxon>Thermoprotei</taxon>
        <taxon>Sulfolobales</taxon>
        <taxon>Sulfolobaceae</taxon>
        <taxon>Metallosphaera</taxon>
    </lineage>
</organism>
<dbReference type="EC" id="2.7.7.6" evidence="1"/>
<dbReference type="EMBL" id="CP000682">
    <property type="protein sequence ID" value="ABP94212.1"/>
    <property type="molecule type" value="Genomic_DNA"/>
</dbReference>
<dbReference type="RefSeq" id="WP_011921181.1">
    <property type="nucleotide sequence ID" value="NC_009440.1"/>
</dbReference>
<dbReference type="SMR" id="A4YCR0"/>
<dbReference type="STRING" id="399549.Msed_0035"/>
<dbReference type="GeneID" id="91756885"/>
<dbReference type="KEGG" id="mse:Msed_0035"/>
<dbReference type="eggNOG" id="arCOG04256">
    <property type="taxonomic scope" value="Archaea"/>
</dbReference>
<dbReference type="HOGENOM" id="CLU_037097_1_0_2"/>
<dbReference type="Proteomes" id="UP000000242">
    <property type="component" value="Chromosome"/>
</dbReference>
<dbReference type="GO" id="GO:0005737">
    <property type="term" value="C:cytoplasm"/>
    <property type="evidence" value="ECO:0007669"/>
    <property type="project" value="UniProtKB-SubCell"/>
</dbReference>
<dbReference type="GO" id="GO:0000428">
    <property type="term" value="C:DNA-directed RNA polymerase complex"/>
    <property type="evidence" value="ECO:0007669"/>
    <property type="project" value="UniProtKB-KW"/>
</dbReference>
<dbReference type="GO" id="GO:0003677">
    <property type="term" value="F:DNA binding"/>
    <property type="evidence" value="ECO:0007669"/>
    <property type="project" value="UniProtKB-UniRule"/>
</dbReference>
<dbReference type="GO" id="GO:0003899">
    <property type="term" value="F:DNA-directed RNA polymerase activity"/>
    <property type="evidence" value="ECO:0007669"/>
    <property type="project" value="UniProtKB-UniRule"/>
</dbReference>
<dbReference type="GO" id="GO:0006351">
    <property type="term" value="P:DNA-templated transcription"/>
    <property type="evidence" value="ECO:0007669"/>
    <property type="project" value="UniProtKB-UniRule"/>
</dbReference>
<dbReference type="CDD" id="cd06528">
    <property type="entry name" value="RNAP_A"/>
    <property type="match status" value="1"/>
</dbReference>
<dbReference type="Gene3D" id="1.10.150.390">
    <property type="match status" value="1"/>
</dbReference>
<dbReference type="HAMAP" id="MF_00411">
    <property type="entry name" value="RNApol_arch_Rpo1C"/>
    <property type="match status" value="1"/>
</dbReference>
<dbReference type="InterPro" id="IPR045867">
    <property type="entry name" value="DNA-dir_RpoC_beta_prime"/>
</dbReference>
<dbReference type="InterPro" id="IPR007081">
    <property type="entry name" value="RNA_pol_Rpb1_5"/>
</dbReference>
<dbReference type="InterPro" id="IPR012757">
    <property type="entry name" value="RPO1C"/>
</dbReference>
<dbReference type="NCBIfam" id="TIGR02389">
    <property type="entry name" value="RNA_pol_rpoA2"/>
    <property type="match status" value="1"/>
</dbReference>
<dbReference type="PANTHER" id="PTHR19376">
    <property type="entry name" value="DNA-DIRECTED RNA POLYMERASE"/>
    <property type="match status" value="1"/>
</dbReference>
<dbReference type="PANTHER" id="PTHR19376:SF32">
    <property type="entry name" value="DNA-DIRECTED RNA POLYMERASE III SUBUNIT RPC1"/>
    <property type="match status" value="1"/>
</dbReference>
<dbReference type="Pfam" id="PF04998">
    <property type="entry name" value="RNA_pol_Rpb1_5"/>
    <property type="match status" value="1"/>
</dbReference>
<dbReference type="SUPFAM" id="SSF64484">
    <property type="entry name" value="beta and beta-prime subunits of DNA dependent RNA-polymerase"/>
    <property type="match status" value="1"/>
</dbReference>
<protein>
    <recommendedName>
        <fullName evidence="1">DNA-directed RNA polymerase subunit Rpo1C</fullName>
        <ecNumber evidence="1">2.7.7.6</ecNumber>
    </recommendedName>
    <alternativeName>
        <fullName evidence="1">DNA-directed RNA polymerase subunit A''</fullName>
    </alternativeName>
</protein>
<accession>A4YCR0</accession>
<sequence length="392" mass="43742">MINNTDNEYLEQKLSELSKKVPASIISKLRESITNSPIEITRDEIDKIIEIVMKDYLSSLVHPGEAIGVVAAQSIGEPGTQMTLRTFHFAGVRELNVTLGLPRLIEIVDARKVPSTPMMTIYLNEEYAKDRDMALEVARRIEYTRVEHVVETVNLDVGGMGIILKLDPVLLKDKGLSTEDVEKVIKKLKMGDYRVENSDEYTIAIYFENMETVTGLFKAREKILSTKIKGVKGIKRAIIRKKGDEYVIITDGSNLEGVLGVKGVDVSRIETNNLHEVESVLGVEAARELITREIKRVLEEQGLDVDIRHIELVSDIMTRTGEVRQIGRHGVTGEKTSVLARAAFEVTVKHLLDAAARGDMEEFKGVVENIIIGQPIKLGTGMVELLMRPANR</sequence>
<name>RPO1C_METS5</name>
<feature type="chain" id="PRO_1000072276" description="DNA-directed RNA polymerase subunit Rpo1C">
    <location>
        <begin position="1"/>
        <end position="392"/>
    </location>
</feature>